<reference key="1">
    <citation type="journal article" date="2006" name="J. Bacteriol.">
        <title>Genome sequence of Aeromonas hydrophila ATCC 7966T: jack of all trades.</title>
        <authorList>
            <person name="Seshadri R."/>
            <person name="Joseph S.W."/>
            <person name="Chopra A.K."/>
            <person name="Sha J."/>
            <person name="Shaw J."/>
            <person name="Graf J."/>
            <person name="Haft D.H."/>
            <person name="Wu M."/>
            <person name="Ren Q."/>
            <person name="Rosovitz M.J."/>
            <person name="Madupu R."/>
            <person name="Tallon L."/>
            <person name="Kim M."/>
            <person name="Jin S."/>
            <person name="Vuong H."/>
            <person name="Stine O.C."/>
            <person name="Ali A."/>
            <person name="Horneman A.J."/>
            <person name="Heidelberg J.F."/>
        </authorList>
    </citation>
    <scope>NUCLEOTIDE SEQUENCE [LARGE SCALE GENOMIC DNA]</scope>
    <source>
        <strain>ATCC 7966 / DSM 30187 / BCRC 13018 / CCUG 14551 / JCM 1027 / KCTC 2358 / NCIMB 9240 / NCTC 8049</strain>
    </source>
</reference>
<comment type="function">
    <text evidence="1">Specifically methylates the guanine in position 2445 (m2G2445) and the guanine in position 2069 (m7G2069) of 23S rRNA.</text>
</comment>
<comment type="catalytic activity">
    <reaction evidence="1">
        <text>guanosine(2445) in 23S rRNA + S-adenosyl-L-methionine = N(2)-methylguanosine(2445) in 23S rRNA + S-adenosyl-L-homocysteine + H(+)</text>
        <dbReference type="Rhea" id="RHEA:42740"/>
        <dbReference type="Rhea" id="RHEA-COMP:10215"/>
        <dbReference type="Rhea" id="RHEA-COMP:10216"/>
        <dbReference type="ChEBI" id="CHEBI:15378"/>
        <dbReference type="ChEBI" id="CHEBI:57856"/>
        <dbReference type="ChEBI" id="CHEBI:59789"/>
        <dbReference type="ChEBI" id="CHEBI:74269"/>
        <dbReference type="ChEBI" id="CHEBI:74481"/>
        <dbReference type="EC" id="2.1.1.173"/>
    </reaction>
</comment>
<comment type="catalytic activity">
    <reaction evidence="1">
        <text>guanosine(2069) in 23S rRNA + S-adenosyl-L-methionine = N(2)-methylguanosine(2069) in 23S rRNA + S-adenosyl-L-homocysteine + H(+)</text>
        <dbReference type="Rhea" id="RHEA:43772"/>
        <dbReference type="Rhea" id="RHEA-COMP:10688"/>
        <dbReference type="Rhea" id="RHEA-COMP:10689"/>
        <dbReference type="ChEBI" id="CHEBI:15378"/>
        <dbReference type="ChEBI" id="CHEBI:57856"/>
        <dbReference type="ChEBI" id="CHEBI:59789"/>
        <dbReference type="ChEBI" id="CHEBI:74269"/>
        <dbReference type="ChEBI" id="CHEBI:74481"/>
        <dbReference type="EC" id="2.1.1.264"/>
    </reaction>
</comment>
<comment type="subcellular location">
    <subcellularLocation>
        <location evidence="1">Cytoplasm</location>
    </subcellularLocation>
</comment>
<comment type="similarity">
    <text evidence="1">Belongs to the methyltransferase superfamily. RlmKL family.</text>
</comment>
<comment type="sequence caution" evidence="2">
    <conflict type="erroneous initiation">
        <sequence resource="EMBL-CDS" id="ABK37025"/>
    </conflict>
    <text>Extended N-terminus.</text>
</comment>
<dbReference type="EC" id="2.1.1.173" evidence="1"/>
<dbReference type="EC" id="2.1.1.264" evidence="1"/>
<dbReference type="EMBL" id="CP000462">
    <property type="protein sequence ID" value="ABK37025.1"/>
    <property type="status" value="ALT_INIT"/>
    <property type="molecule type" value="Genomic_DNA"/>
</dbReference>
<dbReference type="RefSeq" id="YP_856808.1">
    <property type="nucleotide sequence ID" value="NC_008570.1"/>
</dbReference>
<dbReference type="SMR" id="A0KKK7"/>
<dbReference type="STRING" id="380703.AHA_2285"/>
<dbReference type="EnsemblBacteria" id="ABK37025">
    <property type="protein sequence ID" value="ABK37025"/>
    <property type="gene ID" value="AHA_2285"/>
</dbReference>
<dbReference type="KEGG" id="aha:AHA_2285"/>
<dbReference type="PATRIC" id="fig|380703.7.peg.2285"/>
<dbReference type="eggNOG" id="COG0116">
    <property type="taxonomic scope" value="Bacteria"/>
</dbReference>
<dbReference type="eggNOG" id="COG1092">
    <property type="taxonomic scope" value="Bacteria"/>
</dbReference>
<dbReference type="HOGENOM" id="CLU_014042_2_0_6"/>
<dbReference type="OrthoDB" id="9809404at2"/>
<dbReference type="Proteomes" id="UP000000756">
    <property type="component" value="Chromosome"/>
</dbReference>
<dbReference type="GO" id="GO:0005737">
    <property type="term" value="C:cytoplasm"/>
    <property type="evidence" value="ECO:0007669"/>
    <property type="project" value="UniProtKB-SubCell"/>
</dbReference>
<dbReference type="GO" id="GO:0052915">
    <property type="term" value="F:23S rRNA (guanine(2445)-N(2))-methyltransferase activity"/>
    <property type="evidence" value="ECO:0007669"/>
    <property type="project" value="UniProtKB-UniRule"/>
</dbReference>
<dbReference type="GO" id="GO:0003723">
    <property type="term" value="F:RNA binding"/>
    <property type="evidence" value="ECO:0007669"/>
    <property type="project" value="UniProtKB-KW"/>
</dbReference>
<dbReference type="GO" id="GO:0070043">
    <property type="term" value="F:rRNA (guanine-N7-)-methyltransferase activity"/>
    <property type="evidence" value="ECO:0007669"/>
    <property type="project" value="UniProtKB-UniRule"/>
</dbReference>
<dbReference type="CDD" id="cd02440">
    <property type="entry name" value="AdoMet_MTases"/>
    <property type="match status" value="1"/>
</dbReference>
<dbReference type="CDD" id="cd11715">
    <property type="entry name" value="THUMP_AdoMetMT"/>
    <property type="match status" value="1"/>
</dbReference>
<dbReference type="FunFam" id="3.30.750.80:FF:000001">
    <property type="entry name" value="Ribosomal RNA large subunit methyltransferase K/L"/>
    <property type="match status" value="1"/>
</dbReference>
<dbReference type="FunFam" id="3.40.50.150:FF:000039">
    <property type="entry name" value="Ribosomal RNA large subunit methyltransferase K/L"/>
    <property type="match status" value="1"/>
</dbReference>
<dbReference type="Gene3D" id="3.30.2130.30">
    <property type="match status" value="1"/>
</dbReference>
<dbReference type="Gene3D" id="3.30.750.80">
    <property type="entry name" value="RNA methyltransferase domain (HRMD) like"/>
    <property type="match status" value="1"/>
</dbReference>
<dbReference type="Gene3D" id="3.40.50.150">
    <property type="entry name" value="Vaccinia Virus protein VP39"/>
    <property type="match status" value="2"/>
</dbReference>
<dbReference type="HAMAP" id="MF_01858">
    <property type="entry name" value="23SrRNA_methyltr_KL"/>
    <property type="match status" value="1"/>
</dbReference>
<dbReference type="InterPro" id="IPR017244">
    <property type="entry name" value="23SrRNA_methyltr_KL"/>
</dbReference>
<dbReference type="InterPro" id="IPR002052">
    <property type="entry name" value="DNA_methylase_N6_adenine_CS"/>
</dbReference>
<dbReference type="InterPro" id="IPR000241">
    <property type="entry name" value="RlmKL-like_Mtase"/>
</dbReference>
<dbReference type="InterPro" id="IPR054170">
    <property type="entry name" value="RlmL_1st"/>
</dbReference>
<dbReference type="InterPro" id="IPR019614">
    <property type="entry name" value="SAM-dep_methyl-trfase"/>
</dbReference>
<dbReference type="InterPro" id="IPR029063">
    <property type="entry name" value="SAM-dependent_MTases_sf"/>
</dbReference>
<dbReference type="InterPro" id="IPR004114">
    <property type="entry name" value="THUMP_dom"/>
</dbReference>
<dbReference type="NCBIfam" id="NF008748">
    <property type="entry name" value="PRK11783.1"/>
    <property type="match status" value="1"/>
</dbReference>
<dbReference type="PANTHER" id="PTHR47313">
    <property type="entry name" value="RIBOSOMAL RNA LARGE SUBUNIT METHYLTRANSFERASE K/L"/>
    <property type="match status" value="1"/>
</dbReference>
<dbReference type="PANTHER" id="PTHR47313:SF1">
    <property type="entry name" value="RIBOSOMAL RNA LARGE SUBUNIT METHYLTRANSFERASE K_L"/>
    <property type="match status" value="1"/>
</dbReference>
<dbReference type="Pfam" id="PF10672">
    <property type="entry name" value="Methyltrans_SAM"/>
    <property type="match status" value="1"/>
</dbReference>
<dbReference type="Pfam" id="PF22020">
    <property type="entry name" value="RlmL_1st"/>
    <property type="match status" value="1"/>
</dbReference>
<dbReference type="Pfam" id="PF02926">
    <property type="entry name" value="THUMP"/>
    <property type="match status" value="1"/>
</dbReference>
<dbReference type="Pfam" id="PF01170">
    <property type="entry name" value="UPF0020"/>
    <property type="match status" value="1"/>
</dbReference>
<dbReference type="PIRSF" id="PIRSF037618">
    <property type="entry name" value="RNA_Mtase_bacteria_prd"/>
    <property type="match status" value="1"/>
</dbReference>
<dbReference type="SMART" id="SM00981">
    <property type="entry name" value="THUMP"/>
    <property type="match status" value="1"/>
</dbReference>
<dbReference type="SUPFAM" id="SSF53335">
    <property type="entry name" value="S-adenosyl-L-methionine-dependent methyltransferases"/>
    <property type="match status" value="2"/>
</dbReference>
<dbReference type="PROSITE" id="PS51165">
    <property type="entry name" value="THUMP"/>
    <property type="match status" value="1"/>
</dbReference>
<evidence type="ECO:0000255" key="1">
    <source>
        <dbReference type="HAMAP-Rule" id="MF_01858"/>
    </source>
</evidence>
<evidence type="ECO:0000305" key="2"/>
<organism>
    <name type="scientific">Aeromonas hydrophila subsp. hydrophila (strain ATCC 7966 / DSM 30187 / BCRC 13018 / CCUG 14551 / JCM 1027 / KCTC 2358 / NCIMB 9240 / NCTC 8049)</name>
    <dbReference type="NCBI Taxonomy" id="380703"/>
    <lineage>
        <taxon>Bacteria</taxon>
        <taxon>Pseudomonadati</taxon>
        <taxon>Pseudomonadota</taxon>
        <taxon>Gammaproteobacteria</taxon>
        <taxon>Aeromonadales</taxon>
        <taxon>Aeromonadaceae</taxon>
        <taxon>Aeromonas</taxon>
    </lineage>
</organism>
<feature type="chain" id="PRO_0000366722" description="Ribosomal RNA large subunit methyltransferase K/L">
    <location>
        <begin position="1"/>
        <end position="717"/>
    </location>
</feature>
<feature type="domain" description="THUMP" evidence="1">
    <location>
        <begin position="43"/>
        <end position="154"/>
    </location>
</feature>
<proteinExistence type="inferred from homology"/>
<sequence>MKEFFATCPKGLENLLAVELTNLGAEQVRETVAGVHFKGELAIGYKACLWSRFASRIVLVLSEFQMNDDLDLYLGAHTIPWEEHFSGTSTIAVDFTGTNPAIRNTQYGALKIKDAIVDRFTKRGHVRPDVDKKSPDIRIMAHLGKGKANITLDLSGPALHQRFYRQGTGEAPLKENLAAAMIARSGWAGEPMMDPMCGSGTLLVEAAFIAADMAPALRRERFGFDRWLQHDSELWQSLLMEAQVRAKRGMQRCEVKLFGCDADSRVLLKARDNAKAAGVAHLITFKQADVTALENPLPMPAPVEGEEGQGEARQVGMLISNPPYGERLGEFPALLEVHQALGDALRRSFQGWKVSILSASPELLSCLRLRADKQYRLFNGALECQLRNYQIAQDSVASQKEVAQDFANRLRKNLKTLEKWAQKENLDCYRLYDADLPEYNAAIDRYQDYLVVQEYAAPKDIPAQKTRQRLLDMVQAAIKVTGMDGEKVILKVRERQEGKQQYQKLSEEQHRMEVQEYGARLWVNLYDYLDTGLFLDHRQTRRMLGQMAKGKRFLNLFAYTGSATVHAGLGGASETTTVDMSRTYLNWAQDNMRLNSLVGREHKFVQADCLKWLSEADDQYDLIFIDPPTFSNSKRMDESFDVQRDHLLLMQHLKRLLAAGGTLVFSNNKRHFKMDLAGLEAIGLKAQNITGKTRPKDFERNQHIHNCWIITHAEAQA</sequence>
<name>RLMKL_AERHH</name>
<protein>
    <recommendedName>
        <fullName evidence="1">Ribosomal RNA large subunit methyltransferase K/L</fullName>
    </recommendedName>
    <domain>
        <recommendedName>
            <fullName evidence="1">23S rRNA m2G2445 methyltransferase</fullName>
            <ecNumber evidence="1">2.1.1.173</ecNumber>
        </recommendedName>
        <alternativeName>
            <fullName evidence="1">rRNA (guanine-N(2)-)-methyltransferase RlmL</fullName>
        </alternativeName>
    </domain>
    <domain>
        <recommendedName>
            <fullName evidence="1">23S rRNA m7G2069 methyltransferase</fullName>
            <ecNumber evidence="1">2.1.1.264</ecNumber>
        </recommendedName>
        <alternativeName>
            <fullName evidence="1">rRNA (guanine-N(7)-)-methyltransferase RlmK</fullName>
        </alternativeName>
    </domain>
</protein>
<gene>
    <name evidence="1" type="primary">rlmL</name>
    <name type="ordered locus">AHA_2285</name>
</gene>
<accession>A0KKK7</accession>
<keyword id="KW-0963">Cytoplasm</keyword>
<keyword id="KW-0489">Methyltransferase</keyword>
<keyword id="KW-1185">Reference proteome</keyword>
<keyword id="KW-0694">RNA-binding</keyword>
<keyword id="KW-0698">rRNA processing</keyword>
<keyword id="KW-0949">S-adenosyl-L-methionine</keyword>
<keyword id="KW-0808">Transferase</keyword>